<proteinExistence type="inferred from homology"/>
<comment type="catalytic activity">
    <reaction evidence="1">
        <text>D-arabinose 5-phosphate + phosphoenolpyruvate + H2O = 3-deoxy-alpha-D-manno-2-octulosonate-8-phosphate + phosphate</text>
        <dbReference type="Rhea" id="RHEA:14053"/>
        <dbReference type="ChEBI" id="CHEBI:15377"/>
        <dbReference type="ChEBI" id="CHEBI:43474"/>
        <dbReference type="ChEBI" id="CHEBI:57693"/>
        <dbReference type="ChEBI" id="CHEBI:58702"/>
        <dbReference type="ChEBI" id="CHEBI:85985"/>
        <dbReference type="EC" id="2.5.1.55"/>
    </reaction>
</comment>
<comment type="pathway">
    <text evidence="1">Carbohydrate biosynthesis; 3-deoxy-D-manno-octulosonate biosynthesis; 3-deoxy-D-manno-octulosonate from D-ribulose 5-phosphate: step 2/3.</text>
</comment>
<comment type="pathway">
    <text evidence="1">Bacterial outer membrane biogenesis; lipopolysaccharide biosynthesis.</text>
</comment>
<comment type="subcellular location">
    <subcellularLocation>
        <location evidence="1">Cytoplasm</location>
    </subcellularLocation>
</comment>
<comment type="similarity">
    <text evidence="1">Belongs to the KdsA family.</text>
</comment>
<protein>
    <recommendedName>
        <fullName evidence="1">2-dehydro-3-deoxyphosphooctonate aldolase</fullName>
        <ecNumber evidence="1">2.5.1.55</ecNumber>
    </recommendedName>
    <alternativeName>
        <fullName evidence="1">3-deoxy-D-manno-octulosonic acid 8-phosphate synthase</fullName>
    </alternativeName>
    <alternativeName>
        <fullName evidence="1">KDO-8-phosphate synthase</fullName>
        <shortName evidence="1">KDO 8-P synthase</shortName>
        <shortName evidence="1">KDOPS</shortName>
    </alternativeName>
    <alternativeName>
        <fullName evidence="1">Phospho-2-dehydro-3-deoxyoctonate aldolase</fullName>
    </alternativeName>
</protein>
<dbReference type="EC" id="2.5.1.55" evidence="1"/>
<dbReference type="EMBL" id="CP000444">
    <property type="protein sequence ID" value="ABI41803.1"/>
    <property type="molecule type" value="Genomic_DNA"/>
</dbReference>
<dbReference type="SMR" id="Q0HYK2"/>
<dbReference type="KEGG" id="shm:Shewmr7_0803"/>
<dbReference type="HOGENOM" id="CLU_036666_0_0_6"/>
<dbReference type="UniPathway" id="UPA00030"/>
<dbReference type="UniPathway" id="UPA00357">
    <property type="reaction ID" value="UER00474"/>
</dbReference>
<dbReference type="GO" id="GO:0005737">
    <property type="term" value="C:cytoplasm"/>
    <property type="evidence" value="ECO:0007669"/>
    <property type="project" value="UniProtKB-SubCell"/>
</dbReference>
<dbReference type="GO" id="GO:0008676">
    <property type="term" value="F:3-deoxy-8-phosphooctulonate synthase activity"/>
    <property type="evidence" value="ECO:0007669"/>
    <property type="project" value="UniProtKB-UniRule"/>
</dbReference>
<dbReference type="GO" id="GO:0019294">
    <property type="term" value="P:keto-3-deoxy-D-manno-octulosonic acid biosynthetic process"/>
    <property type="evidence" value="ECO:0007669"/>
    <property type="project" value="UniProtKB-UniRule"/>
</dbReference>
<dbReference type="Gene3D" id="3.20.20.70">
    <property type="entry name" value="Aldolase class I"/>
    <property type="match status" value="1"/>
</dbReference>
<dbReference type="HAMAP" id="MF_00056">
    <property type="entry name" value="KDO8P_synth"/>
    <property type="match status" value="1"/>
</dbReference>
<dbReference type="InterPro" id="IPR013785">
    <property type="entry name" value="Aldolase_TIM"/>
</dbReference>
<dbReference type="InterPro" id="IPR006218">
    <property type="entry name" value="DAHP1/KDSA"/>
</dbReference>
<dbReference type="InterPro" id="IPR006269">
    <property type="entry name" value="KDO8P_synthase"/>
</dbReference>
<dbReference type="NCBIfam" id="TIGR01362">
    <property type="entry name" value="KDO8P_synth"/>
    <property type="match status" value="1"/>
</dbReference>
<dbReference type="NCBIfam" id="NF003543">
    <property type="entry name" value="PRK05198.1"/>
    <property type="match status" value="1"/>
</dbReference>
<dbReference type="NCBIfam" id="NF009109">
    <property type="entry name" value="PRK12457.1"/>
    <property type="match status" value="1"/>
</dbReference>
<dbReference type="PANTHER" id="PTHR21057">
    <property type="entry name" value="PHOSPHO-2-DEHYDRO-3-DEOXYHEPTONATE ALDOLASE"/>
    <property type="match status" value="1"/>
</dbReference>
<dbReference type="Pfam" id="PF00793">
    <property type="entry name" value="DAHP_synth_1"/>
    <property type="match status" value="1"/>
</dbReference>
<dbReference type="SUPFAM" id="SSF51569">
    <property type="entry name" value="Aldolase"/>
    <property type="match status" value="1"/>
</dbReference>
<sequence>MSNKIINLGSIEIANDKPFVLFGGMNVLESRDLAMSIAETYAEVTQKLGIPYVFKASFDKANRSSVNSYRGPGMEEGLKIFEEIKKTFNLPLITDVHETYQCAPVAEVVDIIQLPAFLARQTDLVVAMAKTGAIINVKKPQFLAPHEMRHIITKFNEAGNDEIILCERGSCFGYNNLVVDMLGMDEMKQSGYPVIFDATHALQRPGGRADSAGGRRAQATELARSGMALGLAGLFIEAHPDPDNAKCDGPCALPLHQLENYLKQMKAIDDLVKSFDPIDTSK</sequence>
<feature type="chain" id="PRO_0000304489" description="2-dehydro-3-deoxyphosphooctonate aldolase">
    <location>
        <begin position="1"/>
        <end position="282"/>
    </location>
</feature>
<reference key="1">
    <citation type="submission" date="2006-08" db="EMBL/GenBank/DDBJ databases">
        <title>Complete sequence of chromosome 1 of Shewanella sp. MR-7.</title>
        <authorList>
            <person name="Copeland A."/>
            <person name="Lucas S."/>
            <person name="Lapidus A."/>
            <person name="Barry K."/>
            <person name="Detter J.C."/>
            <person name="Glavina del Rio T."/>
            <person name="Hammon N."/>
            <person name="Israni S."/>
            <person name="Dalin E."/>
            <person name="Tice H."/>
            <person name="Pitluck S."/>
            <person name="Kiss H."/>
            <person name="Brettin T."/>
            <person name="Bruce D."/>
            <person name="Han C."/>
            <person name="Tapia R."/>
            <person name="Gilna P."/>
            <person name="Schmutz J."/>
            <person name="Larimer F."/>
            <person name="Land M."/>
            <person name="Hauser L."/>
            <person name="Kyrpides N."/>
            <person name="Mikhailova N."/>
            <person name="Nealson K."/>
            <person name="Konstantinidis K."/>
            <person name="Klappenbach J."/>
            <person name="Tiedje J."/>
            <person name="Richardson P."/>
        </authorList>
    </citation>
    <scope>NUCLEOTIDE SEQUENCE [LARGE SCALE GENOMIC DNA]</scope>
    <source>
        <strain>MR-7</strain>
    </source>
</reference>
<evidence type="ECO:0000255" key="1">
    <source>
        <dbReference type="HAMAP-Rule" id="MF_00056"/>
    </source>
</evidence>
<organism>
    <name type="scientific">Shewanella sp. (strain MR-7)</name>
    <dbReference type="NCBI Taxonomy" id="60481"/>
    <lineage>
        <taxon>Bacteria</taxon>
        <taxon>Pseudomonadati</taxon>
        <taxon>Pseudomonadota</taxon>
        <taxon>Gammaproteobacteria</taxon>
        <taxon>Alteromonadales</taxon>
        <taxon>Shewanellaceae</taxon>
        <taxon>Shewanella</taxon>
    </lineage>
</organism>
<accession>Q0HYK2</accession>
<keyword id="KW-0963">Cytoplasm</keyword>
<keyword id="KW-0448">Lipopolysaccharide biosynthesis</keyword>
<keyword id="KW-0808">Transferase</keyword>
<name>KDSA_SHESR</name>
<gene>
    <name evidence="1" type="primary">kdsA</name>
    <name type="ordered locus">Shewmr7_0803</name>
</gene>